<reference key="1">
    <citation type="journal article" date="2001" name="Nature">
        <title>Genome sequence of enterohaemorrhagic Escherichia coli O157:H7.</title>
        <authorList>
            <person name="Perna N.T."/>
            <person name="Plunkett G. III"/>
            <person name="Burland V."/>
            <person name="Mau B."/>
            <person name="Glasner J.D."/>
            <person name="Rose D.J."/>
            <person name="Mayhew G.F."/>
            <person name="Evans P.S."/>
            <person name="Gregor J."/>
            <person name="Kirkpatrick H.A."/>
            <person name="Posfai G."/>
            <person name="Hackett J."/>
            <person name="Klink S."/>
            <person name="Boutin A."/>
            <person name="Shao Y."/>
            <person name="Miller L."/>
            <person name="Grotbeck E.J."/>
            <person name="Davis N.W."/>
            <person name="Lim A."/>
            <person name="Dimalanta E.T."/>
            <person name="Potamousis K."/>
            <person name="Apodaca J."/>
            <person name="Anantharaman T.S."/>
            <person name="Lin J."/>
            <person name="Yen G."/>
            <person name="Schwartz D.C."/>
            <person name="Welch R.A."/>
            <person name="Blattner F.R."/>
        </authorList>
    </citation>
    <scope>NUCLEOTIDE SEQUENCE [LARGE SCALE GENOMIC DNA]</scope>
    <source>
        <strain>O157:H7 / EDL933 / ATCC 700927 / EHEC</strain>
    </source>
</reference>
<reference key="2">
    <citation type="journal article" date="2001" name="DNA Res.">
        <title>Complete genome sequence of enterohemorrhagic Escherichia coli O157:H7 and genomic comparison with a laboratory strain K-12.</title>
        <authorList>
            <person name="Hayashi T."/>
            <person name="Makino K."/>
            <person name="Ohnishi M."/>
            <person name="Kurokawa K."/>
            <person name="Ishii K."/>
            <person name="Yokoyama K."/>
            <person name="Han C.-G."/>
            <person name="Ohtsubo E."/>
            <person name="Nakayama K."/>
            <person name="Murata T."/>
            <person name="Tanaka M."/>
            <person name="Tobe T."/>
            <person name="Iida T."/>
            <person name="Takami H."/>
            <person name="Honda T."/>
            <person name="Sasakawa C."/>
            <person name="Ogasawara N."/>
            <person name="Yasunaga T."/>
            <person name="Kuhara S."/>
            <person name="Shiba T."/>
            <person name="Hattori M."/>
            <person name="Shinagawa H."/>
        </authorList>
    </citation>
    <scope>NUCLEOTIDE SEQUENCE [LARGE SCALE GENOMIC DNA]</scope>
    <source>
        <strain>O157:H7 / Sakai / RIMD 0509952 / EHEC</strain>
    </source>
</reference>
<protein>
    <recommendedName>
        <fullName>Dihydroneopterin triphosphate 2'-epimerase</fullName>
        <ecNumber evidence="1">5.1.99.7</ecNumber>
    </recommendedName>
    <alternativeName>
        <fullName>D-erythro-7,8-dihydroneopterin triphosphate epimerase</fullName>
    </alternativeName>
</protein>
<accession>P0AC21</accession>
<accession>P77796</accession>
<accession>P80449</accession>
<gene>
    <name type="primary">folX</name>
    <name type="ordered locus">Z3565</name>
    <name type="ordered locus">ECs3187</name>
</gene>
<name>FOLX_ECO57</name>
<organism>
    <name type="scientific">Escherichia coli O157:H7</name>
    <dbReference type="NCBI Taxonomy" id="83334"/>
    <lineage>
        <taxon>Bacteria</taxon>
        <taxon>Pseudomonadati</taxon>
        <taxon>Pseudomonadota</taxon>
        <taxon>Gammaproteobacteria</taxon>
        <taxon>Enterobacterales</taxon>
        <taxon>Enterobacteriaceae</taxon>
        <taxon>Escherichia</taxon>
    </lineage>
</organism>
<proteinExistence type="inferred from homology"/>
<evidence type="ECO:0000250" key="1">
    <source>
        <dbReference type="UniProtKB" id="P0AC19"/>
    </source>
</evidence>
<evidence type="ECO:0000305" key="2"/>
<dbReference type="EC" id="5.1.99.7" evidence="1"/>
<dbReference type="EMBL" id="AE005174">
    <property type="protein sequence ID" value="AAG57432.1"/>
    <property type="molecule type" value="Genomic_DNA"/>
</dbReference>
<dbReference type="EMBL" id="BA000007">
    <property type="protein sequence ID" value="BAB36610.1"/>
    <property type="molecule type" value="Genomic_DNA"/>
</dbReference>
<dbReference type="PIR" id="C91027">
    <property type="entry name" value="C91027"/>
</dbReference>
<dbReference type="PIR" id="D85871">
    <property type="entry name" value="D85871"/>
</dbReference>
<dbReference type="RefSeq" id="NP_311214.1">
    <property type="nucleotide sequence ID" value="NC_002695.1"/>
</dbReference>
<dbReference type="RefSeq" id="WP_000068457.1">
    <property type="nucleotide sequence ID" value="NZ_VOAI01000001.1"/>
</dbReference>
<dbReference type="SMR" id="P0AC21"/>
<dbReference type="STRING" id="155864.Z3565"/>
<dbReference type="GeneID" id="916895"/>
<dbReference type="GeneID" id="93774871"/>
<dbReference type="KEGG" id="ece:Z3565"/>
<dbReference type="KEGG" id="ecs:ECs_3187"/>
<dbReference type="PATRIC" id="fig|386585.9.peg.3327"/>
<dbReference type="eggNOG" id="COG1539">
    <property type="taxonomic scope" value="Bacteria"/>
</dbReference>
<dbReference type="HOGENOM" id="CLU_112632_0_0_6"/>
<dbReference type="OMA" id="RDNDIDH"/>
<dbReference type="Proteomes" id="UP000000558">
    <property type="component" value="Chromosome"/>
</dbReference>
<dbReference type="Proteomes" id="UP000002519">
    <property type="component" value="Chromosome"/>
</dbReference>
<dbReference type="GO" id="GO:0005829">
    <property type="term" value="C:cytosol"/>
    <property type="evidence" value="ECO:0007669"/>
    <property type="project" value="TreeGrafter"/>
</dbReference>
<dbReference type="GO" id="GO:0004150">
    <property type="term" value="F:dihydroneopterin aldolase activity"/>
    <property type="evidence" value="ECO:0007669"/>
    <property type="project" value="InterPro"/>
</dbReference>
<dbReference type="GO" id="GO:0008719">
    <property type="term" value="F:dihydroneopterin triphosphate 2'-epimerase activity"/>
    <property type="evidence" value="ECO:0007669"/>
    <property type="project" value="UniProtKB-EC"/>
</dbReference>
<dbReference type="GO" id="GO:0006760">
    <property type="term" value="P:folic acid-containing compound metabolic process"/>
    <property type="evidence" value="ECO:0007669"/>
    <property type="project" value="InterPro"/>
</dbReference>
<dbReference type="CDD" id="cd00534">
    <property type="entry name" value="DHNA_DHNTPE"/>
    <property type="match status" value="1"/>
</dbReference>
<dbReference type="FunFam" id="3.30.1130.10:FF:000005">
    <property type="entry name" value="D-erythro-7,8-dihydroneopterin triphosphate epimerase"/>
    <property type="match status" value="1"/>
</dbReference>
<dbReference type="Gene3D" id="3.30.1130.10">
    <property type="match status" value="1"/>
</dbReference>
<dbReference type="InterPro" id="IPR006156">
    <property type="entry name" value="Dihydroneopterin_aldolase"/>
</dbReference>
<dbReference type="InterPro" id="IPR006157">
    <property type="entry name" value="FolB_dom"/>
</dbReference>
<dbReference type="InterPro" id="IPR043133">
    <property type="entry name" value="GTP-CH-I_C/QueF"/>
</dbReference>
<dbReference type="NCBIfam" id="TIGR00526">
    <property type="entry name" value="folB_dom"/>
    <property type="match status" value="1"/>
</dbReference>
<dbReference type="NCBIfam" id="NF008418">
    <property type="entry name" value="PRK11245.1"/>
    <property type="match status" value="1"/>
</dbReference>
<dbReference type="PANTHER" id="PTHR42844">
    <property type="entry name" value="DIHYDRONEOPTERIN ALDOLASE 1-RELATED"/>
    <property type="match status" value="1"/>
</dbReference>
<dbReference type="PANTHER" id="PTHR42844:SF10">
    <property type="entry name" value="DIHYDRONEOPTERIN TRIPHOSPHATE 2'-EPIMERASE"/>
    <property type="match status" value="1"/>
</dbReference>
<dbReference type="Pfam" id="PF02152">
    <property type="entry name" value="FolB"/>
    <property type="match status" value="1"/>
</dbReference>
<dbReference type="SMART" id="SM00905">
    <property type="entry name" value="FolB"/>
    <property type="match status" value="1"/>
</dbReference>
<dbReference type="SUPFAM" id="SSF55620">
    <property type="entry name" value="Tetrahydrobiopterin biosynthesis enzymes-like"/>
    <property type="match status" value="1"/>
</dbReference>
<sequence>MAQPAAIIRIKNLRLRTFIGIKEEEINNRQDIVINVTIHYPADKARTSEDINDALNYRTVTKNIIQHVENNRFSLLEKLTQDVLDIAREHHWVTYAEVEIDKLHALRYADSVSMTLSWQR</sequence>
<keyword id="KW-0413">Isomerase</keyword>
<keyword id="KW-1185">Reference proteome</keyword>
<comment type="function">
    <text evidence="1">Catalyzes the epimerization of carbon 2' of the side chain of 7,8-dihydroneopterin triphosphate (H2NTP) to form 7,8-dihydromonapterin triphosphate (H2MTP). Is required for tetrahydromonapterin biosynthesis.</text>
</comment>
<comment type="catalytic activity">
    <reaction evidence="1">
        <text>7,8-dihydroneopterin 3'-triphosphate = 7,8-dihydromonapterin 3'-triphosphate</text>
        <dbReference type="Rhea" id="RHEA:28346"/>
        <dbReference type="ChEBI" id="CHEBI:58462"/>
        <dbReference type="ChEBI" id="CHEBI:61186"/>
        <dbReference type="EC" id="5.1.99.7"/>
    </reaction>
</comment>
<comment type="subunit">
    <text evidence="1">Homooctamer.</text>
</comment>
<comment type="similarity">
    <text evidence="2">Belongs to the DHNA family.</text>
</comment>
<feature type="initiator methionine" description="Removed" evidence="1">
    <location>
        <position position="1"/>
    </location>
</feature>
<feature type="chain" id="PRO_0000168296" description="Dihydroneopterin triphosphate 2'-epimerase">
    <location>
        <begin position="2"/>
        <end position="120"/>
    </location>
</feature>